<accession>Q81J45</accession>
<feature type="chain" id="PRO_0000146170" description="Small ribosomal subunit protein uS12">
    <location>
        <begin position="1"/>
        <end position="140"/>
    </location>
</feature>
<feature type="modified residue" description="3-methylthioaspartic acid" evidence="1">
    <location>
        <position position="102"/>
    </location>
</feature>
<organism>
    <name type="scientific">Bacillus cereus (strain ATCC 14579 / DSM 31 / CCUG 7414 / JCM 2152 / NBRC 15305 / NCIMB 9373 / NCTC 2599 / NRRL B-3711)</name>
    <dbReference type="NCBI Taxonomy" id="226900"/>
    <lineage>
        <taxon>Bacteria</taxon>
        <taxon>Bacillati</taxon>
        <taxon>Bacillota</taxon>
        <taxon>Bacilli</taxon>
        <taxon>Bacillales</taxon>
        <taxon>Bacillaceae</taxon>
        <taxon>Bacillus</taxon>
        <taxon>Bacillus cereus group</taxon>
    </lineage>
</organism>
<reference key="1">
    <citation type="journal article" date="2003" name="Nature">
        <title>Genome sequence of Bacillus cereus and comparative analysis with Bacillus anthracis.</title>
        <authorList>
            <person name="Ivanova N."/>
            <person name="Sorokin A."/>
            <person name="Anderson I."/>
            <person name="Galleron N."/>
            <person name="Candelon B."/>
            <person name="Kapatral V."/>
            <person name="Bhattacharyya A."/>
            <person name="Reznik G."/>
            <person name="Mikhailova N."/>
            <person name="Lapidus A."/>
            <person name="Chu L."/>
            <person name="Mazur M."/>
            <person name="Goltsman E."/>
            <person name="Larsen N."/>
            <person name="D'Souza M."/>
            <person name="Walunas T."/>
            <person name="Grechkin Y."/>
            <person name="Pusch G."/>
            <person name="Haselkorn R."/>
            <person name="Fonstein M."/>
            <person name="Ehrlich S.D."/>
            <person name="Overbeek R."/>
            <person name="Kyrpides N.C."/>
        </authorList>
    </citation>
    <scope>NUCLEOTIDE SEQUENCE [LARGE SCALE GENOMIC DNA]</scope>
    <source>
        <strain>ATCC 14579 / DSM 31 / CCUG 7414 / JCM 2152 / NBRC 15305 / NCIMB 9373 / NCTC 2599 / NRRL B-3711</strain>
    </source>
</reference>
<sequence length="140" mass="15500">MPTINQLVRNGRTDKVWKSKSPALNKGFNSLKKKSTDISAPQKRGVCTRVGTMTPKKPNSALRKYARVRLTNGIEVTAYIPGIGHNLQEHSVVLIRGGRVKDLPGVRYHIVRGALDTAGVDKRMQGRSKYGTKRPKPAKK</sequence>
<proteinExistence type="inferred from homology"/>
<name>RS12_BACCR</name>
<evidence type="ECO:0000250" key="1"/>
<evidence type="ECO:0000255" key="2">
    <source>
        <dbReference type="HAMAP-Rule" id="MF_00403"/>
    </source>
</evidence>
<evidence type="ECO:0000305" key="3"/>
<keyword id="KW-0488">Methylation</keyword>
<keyword id="KW-1185">Reference proteome</keyword>
<keyword id="KW-0687">Ribonucleoprotein</keyword>
<keyword id="KW-0689">Ribosomal protein</keyword>
<keyword id="KW-0694">RNA-binding</keyword>
<keyword id="KW-0699">rRNA-binding</keyword>
<keyword id="KW-0820">tRNA-binding</keyword>
<gene>
    <name evidence="2" type="primary">rpsL</name>
    <name type="ordered locus">BC_0125</name>
</gene>
<dbReference type="EMBL" id="AE016877">
    <property type="protein sequence ID" value="AAP07207.1"/>
    <property type="molecule type" value="Genomic_DNA"/>
</dbReference>
<dbReference type="RefSeq" id="NP_830006.1">
    <property type="nucleotide sequence ID" value="NC_004722.1"/>
</dbReference>
<dbReference type="RefSeq" id="WP_001142341.1">
    <property type="nucleotide sequence ID" value="NZ_CP138336.1"/>
</dbReference>
<dbReference type="SMR" id="Q81J45"/>
<dbReference type="STRING" id="226900.BC_0125"/>
<dbReference type="GeneID" id="92887798"/>
<dbReference type="KEGG" id="bce:BC0125"/>
<dbReference type="PATRIC" id="fig|226900.8.peg.127"/>
<dbReference type="HOGENOM" id="CLU_104295_1_2_9"/>
<dbReference type="OrthoDB" id="9802366at2"/>
<dbReference type="PRO" id="PR:Q81J45"/>
<dbReference type="Proteomes" id="UP000001417">
    <property type="component" value="Chromosome"/>
</dbReference>
<dbReference type="GO" id="GO:0005840">
    <property type="term" value="C:ribosome"/>
    <property type="evidence" value="ECO:0000318"/>
    <property type="project" value="GO_Central"/>
</dbReference>
<dbReference type="GO" id="GO:0015935">
    <property type="term" value="C:small ribosomal subunit"/>
    <property type="evidence" value="ECO:0007669"/>
    <property type="project" value="InterPro"/>
</dbReference>
<dbReference type="GO" id="GO:0019843">
    <property type="term" value="F:rRNA binding"/>
    <property type="evidence" value="ECO:0007669"/>
    <property type="project" value="UniProtKB-UniRule"/>
</dbReference>
<dbReference type="GO" id="GO:0003735">
    <property type="term" value="F:structural constituent of ribosome"/>
    <property type="evidence" value="ECO:0000318"/>
    <property type="project" value="GO_Central"/>
</dbReference>
<dbReference type="GO" id="GO:0000049">
    <property type="term" value="F:tRNA binding"/>
    <property type="evidence" value="ECO:0007669"/>
    <property type="project" value="UniProtKB-UniRule"/>
</dbReference>
<dbReference type="GO" id="GO:0006412">
    <property type="term" value="P:translation"/>
    <property type="evidence" value="ECO:0000318"/>
    <property type="project" value="GO_Central"/>
</dbReference>
<dbReference type="CDD" id="cd03368">
    <property type="entry name" value="Ribosomal_S12"/>
    <property type="match status" value="1"/>
</dbReference>
<dbReference type="FunFam" id="2.40.50.140:FF:000001">
    <property type="entry name" value="30S ribosomal protein S12"/>
    <property type="match status" value="1"/>
</dbReference>
<dbReference type="Gene3D" id="2.40.50.140">
    <property type="entry name" value="Nucleic acid-binding proteins"/>
    <property type="match status" value="1"/>
</dbReference>
<dbReference type="HAMAP" id="MF_00403_B">
    <property type="entry name" value="Ribosomal_uS12_B"/>
    <property type="match status" value="1"/>
</dbReference>
<dbReference type="InterPro" id="IPR012340">
    <property type="entry name" value="NA-bd_OB-fold"/>
</dbReference>
<dbReference type="InterPro" id="IPR006032">
    <property type="entry name" value="Ribosomal_uS12"/>
</dbReference>
<dbReference type="InterPro" id="IPR005679">
    <property type="entry name" value="Ribosomal_uS12_bac"/>
</dbReference>
<dbReference type="NCBIfam" id="TIGR00981">
    <property type="entry name" value="rpsL_bact"/>
    <property type="match status" value="1"/>
</dbReference>
<dbReference type="PANTHER" id="PTHR11652">
    <property type="entry name" value="30S RIBOSOMAL PROTEIN S12 FAMILY MEMBER"/>
    <property type="match status" value="1"/>
</dbReference>
<dbReference type="Pfam" id="PF00164">
    <property type="entry name" value="Ribosom_S12_S23"/>
    <property type="match status" value="1"/>
</dbReference>
<dbReference type="PRINTS" id="PR01034">
    <property type="entry name" value="RIBOSOMALS12"/>
</dbReference>
<dbReference type="SUPFAM" id="SSF50249">
    <property type="entry name" value="Nucleic acid-binding proteins"/>
    <property type="match status" value="1"/>
</dbReference>
<dbReference type="PROSITE" id="PS00055">
    <property type="entry name" value="RIBOSOMAL_S12"/>
    <property type="match status" value="1"/>
</dbReference>
<protein>
    <recommendedName>
        <fullName evidence="2">Small ribosomal subunit protein uS12</fullName>
    </recommendedName>
    <alternativeName>
        <fullName evidence="3">30S ribosomal protein S12</fullName>
    </alternativeName>
</protein>
<comment type="function">
    <text evidence="2">With S4 and S5 plays an important role in translational accuracy.</text>
</comment>
<comment type="function">
    <text evidence="2">Interacts with and stabilizes bases of the 16S rRNA that are involved in tRNA selection in the A site and with the mRNA backbone. Located at the interface of the 30S and 50S subunits, it traverses the body of the 30S subunit contacting proteins on the other side and probably holding the rRNA structure together. The combined cluster of proteins S8, S12 and S17 appears to hold together the shoulder and platform of the 30S subunit.</text>
</comment>
<comment type="subunit">
    <text evidence="2">Part of the 30S ribosomal subunit. Contacts proteins S8 and S17. May interact with IF1 in the 30S initiation complex.</text>
</comment>
<comment type="similarity">
    <text evidence="2">Belongs to the universal ribosomal protein uS12 family.</text>
</comment>